<comment type="function">
    <text evidence="5">Leucine-rich repeat receptor-like protein kinase involved in secondary cell wall formation in xylem fibers. May play a role in a regulatory network which also incorporates the TDR/PXY signaling pathway and regulates the maturation of interfascicular fiber cells. May promote the initiation of secondary cell wall deposition during the procedure of cell expansion.</text>
</comment>
<comment type="subcellular location">
    <subcellularLocation>
        <location evidence="7">Cell membrane</location>
        <topology evidence="1">Single-pass type I membrane protein</topology>
    </subcellularLocation>
</comment>
<comment type="tissue specificity">
    <text evidence="5">Expressed in the vascular strands of cotyledons, the shoot apex, hypocotyls, roots, leaves, stems and flowers.</text>
</comment>
<comment type="domain">
    <text evidence="2">The protein kinase domain is predicted to be catalytically inactive.</text>
</comment>
<comment type="disruption phenotype">
    <text evidence="5">No visible phenotype under normal growth conditions, but under short day conditions inflorescence stems of mutant plants show dramatic reduction of secondary cell wall formation in xylem fibers, leading to the inability of the stems to support an upright growth.</text>
</comment>
<comment type="similarity">
    <text evidence="7">Belongs to the protein kinase superfamily. Ser/Thr protein kinase family.</text>
</comment>
<gene>
    <name evidence="6" type="primary">PXC1</name>
    <name evidence="8" type="ordered locus">At2g36570</name>
</gene>
<proteinExistence type="evidence at protein level"/>
<name>PXC1_ARATH</name>
<feature type="signal peptide" evidence="1">
    <location>
        <begin position="1"/>
        <end position="21"/>
    </location>
</feature>
<feature type="chain" id="PRO_0000432871" description="Leucine-rich repeat receptor-like protein kinase PXC1" evidence="1">
    <location>
        <begin position="22"/>
        <end position="672"/>
    </location>
</feature>
<feature type="topological domain" description="Extracellular" evidence="7">
    <location>
        <begin position="22"/>
        <end position="269"/>
    </location>
</feature>
<feature type="transmembrane region" description="Helical" evidence="1">
    <location>
        <begin position="270"/>
        <end position="290"/>
    </location>
</feature>
<feature type="topological domain" description="Cytoplasmic" evidence="7">
    <location>
        <begin position="291"/>
        <end position="672"/>
    </location>
</feature>
<feature type="repeat" description="LRR 1" evidence="1">
    <location>
        <begin position="87"/>
        <end position="110"/>
    </location>
</feature>
<feature type="repeat" description="LRR 2" evidence="1">
    <location>
        <begin position="112"/>
        <end position="134"/>
    </location>
</feature>
<feature type="repeat" description="LRR 3" evidence="1">
    <location>
        <begin position="135"/>
        <end position="158"/>
    </location>
</feature>
<feature type="repeat" description="LRR 4" evidence="1">
    <location>
        <begin position="160"/>
        <end position="181"/>
    </location>
</feature>
<feature type="repeat" description="LRR 5" evidence="1">
    <location>
        <begin position="182"/>
        <end position="205"/>
    </location>
</feature>
<feature type="domain" description="Protein kinase" evidence="2">
    <location>
        <begin position="357"/>
        <end position="645"/>
    </location>
</feature>
<feature type="region of interest" description="Disordered" evidence="4">
    <location>
        <begin position="233"/>
        <end position="254"/>
    </location>
</feature>
<feature type="region of interest" description="Disordered" evidence="4">
    <location>
        <begin position="300"/>
        <end position="333"/>
    </location>
</feature>
<feature type="region of interest" description="Disordered" evidence="4">
    <location>
        <begin position="650"/>
        <end position="672"/>
    </location>
</feature>
<feature type="compositionally biased region" description="Polar residues" evidence="4">
    <location>
        <begin position="233"/>
        <end position="249"/>
    </location>
</feature>
<feature type="compositionally biased region" description="Polar residues" evidence="4">
    <location>
        <begin position="661"/>
        <end position="672"/>
    </location>
</feature>
<feature type="binding site" evidence="2">
    <location>
        <begin position="363"/>
        <end position="371"/>
    </location>
    <ligand>
        <name>ATP</name>
        <dbReference type="ChEBI" id="CHEBI:30616"/>
    </ligand>
</feature>
<feature type="binding site" evidence="2">
    <location>
        <position position="386"/>
    </location>
    <ligand>
        <name>ATP</name>
        <dbReference type="ChEBI" id="CHEBI:30616"/>
    </ligand>
</feature>
<feature type="glycosylation site" description="N-linked (GlcNAc...) asparagine" evidence="3">
    <location>
        <position position="23"/>
    </location>
</feature>
<feature type="glycosylation site" description="N-linked (GlcNAc...) asparagine" evidence="3">
    <location>
        <position position="44"/>
    </location>
</feature>
<feature type="glycosylation site" description="N-linked (GlcNAc...) asparagine" evidence="3">
    <location>
        <position position="101"/>
    </location>
</feature>
<feature type="glycosylation site" description="N-linked (GlcNAc...) asparagine" evidence="3">
    <location>
        <position position="188"/>
    </location>
</feature>
<feature type="glycosylation site" description="N-linked (GlcNAc...) asparagine" evidence="3">
    <location>
        <position position="197"/>
    </location>
</feature>
<feature type="cross-link" description="Glycyl lysine isopeptide (Lys-Gly) (interchain with G-Cter in ubiquitin)" evidence="9">
    <location>
        <position position="111"/>
    </location>
</feature>
<feature type="sequence conflict" description="In Ref. 4; BAE99831." evidence="7" ref="4">
    <original>D</original>
    <variation>N</variation>
    <location>
        <position position="208"/>
    </location>
</feature>
<feature type="sequence conflict" description="In Ref. 4; BAE99831." evidence="7" ref="4">
    <original>L</original>
    <variation>F</variation>
    <location>
        <position position="442"/>
    </location>
</feature>
<organism>
    <name type="scientific">Arabidopsis thaliana</name>
    <name type="common">Mouse-ear cress</name>
    <dbReference type="NCBI Taxonomy" id="3702"/>
    <lineage>
        <taxon>Eukaryota</taxon>
        <taxon>Viridiplantae</taxon>
        <taxon>Streptophyta</taxon>
        <taxon>Embryophyta</taxon>
        <taxon>Tracheophyta</taxon>
        <taxon>Spermatophyta</taxon>
        <taxon>Magnoliopsida</taxon>
        <taxon>eudicotyledons</taxon>
        <taxon>Gunneridae</taxon>
        <taxon>Pentapetalae</taxon>
        <taxon>rosids</taxon>
        <taxon>malvids</taxon>
        <taxon>Brassicales</taxon>
        <taxon>Brassicaceae</taxon>
        <taxon>Camelineae</taxon>
        <taxon>Arabidopsis</taxon>
    </lineage>
</organism>
<evidence type="ECO:0000255" key="1"/>
<evidence type="ECO:0000255" key="2">
    <source>
        <dbReference type="PROSITE-ProRule" id="PRU00159"/>
    </source>
</evidence>
<evidence type="ECO:0000255" key="3">
    <source>
        <dbReference type="PROSITE-ProRule" id="PRU00498"/>
    </source>
</evidence>
<evidence type="ECO:0000256" key="4">
    <source>
        <dbReference type="SAM" id="MobiDB-lite"/>
    </source>
</evidence>
<evidence type="ECO:0000269" key="5">
    <source>
    </source>
</evidence>
<evidence type="ECO:0000303" key="6">
    <source>
    </source>
</evidence>
<evidence type="ECO:0000305" key="7"/>
<evidence type="ECO:0000312" key="8">
    <source>
        <dbReference type="Araport" id="AT2G36570"/>
    </source>
</evidence>
<evidence type="ECO:0007744" key="9">
    <source>
    </source>
</evidence>
<protein>
    <recommendedName>
        <fullName evidence="7">Leucine-rich repeat receptor-like protein kinase PXC1</fullName>
    </recommendedName>
    <alternativeName>
        <fullName evidence="6">Protein PXY/TDR-CORRELATED 1</fullName>
    </alternativeName>
</protein>
<accession>Q9SJQ1</accession>
<accession>Q0WSR7</accession>
<reference key="1">
    <citation type="journal article" date="1999" name="Nature">
        <title>Sequence and analysis of chromosome 2 of the plant Arabidopsis thaliana.</title>
        <authorList>
            <person name="Lin X."/>
            <person name="Kaul S."/>
            <person name="Rounsley S.D."/>
            <person name="Shea T.P."/>
            <person name="Benito M.-I."/>
            <person name="Town C.D."/>
            <person name="Fujii C.Y."/>
            <person name="Mason T.M."/>
            <person name="Bowman C.L."/>
            <person name="Barnstead M.E."/>
            <person name="Feldblyum T.V."/>
            <person name="Buell C.R."/>
            <person name="Ketchum K.A."/>
            <person name="Lee J.J."/>
            <person name="Ronning C.M."/>
            <person name="Koo H.L."/>
            <person name="Moffat K.S."/>
            <person name="Cronin L.A."/>
            <person name="Shen M."/>
            <person name="Pai G."/>
            <person name="Van Aken S."/>
            <person name="Umayam L."/>
            <person name="Tallon L.J."/>
            <person name="Gill J.E."/>
            <person name="Adams M.D."/>
            <person name="Carrera A.J."/>
            <person name="Creasy T.H."/>
            <person name="Goodman H.M."/>
            <person name="Somerville C.R."/>
            <person name="Copenhaver G.P."/>
            <person name="Preuss D."/>
            <person name="Nierman W.C."/>
            <person name="White O."/>
            <person name="Eisen J.A."/>
            <person name="Salzberg S.L."/>
            <person name="Fraser C.M."/>
            <person name="Venter J.C."/>
        </authorList>
    </citation>
    <scope>NUCLEOTIDE SEQUENCE [LARGE SCALE GENOMIC DNA]</scope>
    <source>
        <strain>cv. Columbia</strain>
    </source>
</reference>
<reference key="2">
    <citation type="journal article" date="2017" name="Plant J.">
        <title>Araport11: a complete reannotation of the Arabidopsis thaliana reference genome.</title>
        <authorList>
            <person name="Cheng C.Y."/>
            <person name="Krishnakumar V."/>
            <person name="Chan A.P."/>
            <person name="Thibaud-Nissen F."/>
            <person name="Schobel S."/>
            <person name="Town C.D."/>
        </authorList>
    </citation>
    <scope>GENOME REANNOTATION</scope>
    <source>
        <strain>cv. Columbia</strain>
    </source>
</reference>
<reference key="3">
    <citation type="journal article" date="2010" name="BMC Genomics">
        <title>Genome-wide cloning and sequence analysis of leucine-rich repeat receptor-like protein kinase genes in Arabidopsis thaliana.</title>
        <authorList>
            <person name="Gou X."/>
            <person name="He K."/>
            <person name="Yang H."/>
            <person name="Yuan T."/>
            <person name="Lin H."/>
            <person name="Clouse S.D."/>
            <person name="Li J."/>
        </authorList>
    </citation>
    <scope>NUCLEOTIDE SEQUENCE [LARGE SCALE MRNA]</scope>
    <source>
        <strain>cv. Columbia</strain>
    </source>
</reference>
<reference key="4">
    <citation type="submission" date="2006-07" db="EMBL/GenBank/DDBJ databases">
        <title>Large-scale analysis of RIKEN Arabidopsis full-length (RAFL) cDNAs.</title>
        <authorList>
            <person name="Totoki Y."/>
            <person name="Seki M."/>
            <person name="Ishida J."/>
            <person name="Nakajima M."/>
            <person name="Enju A."/>
            <person name="Kamiya A."/>
            <person name="Narusaka M."/>
            <person name="Shin-i T."/>
            <person name="Nakagawa M."/>
            <person name="Sakamoto N."/>
            <person name="Oishi K."/>
            <person name="Kohara Y."/>
            <person name="Kobayashi M."/>
            <person name="Toyoda A."/>
            <person name="Sakaki Y."/>
            <person name="Sakurai T."/>
            <person name="Iida K."/>
            <person name="Akiyama K."/>
            <person name="Satou M."/>
            <person name="Toyoda T."/>
            <person name="Konagaya A."/>
            <person name="Carninci P."/>
            <person name="Kawai J."/>
            <person name="Hayashizaki Y."/>
            <person name="Shinozaki K."/>
        </authorList>
    </citation>
    <scope>NUCLEOTIDE SEQUENCE [LARGE SCALE MRNA]</scope>
    <source>
        <strain>cv. Columbia</strain>
    </source>
</reference>
<reference key="5">
    <citation type="journal article" date="2007" name="Mol. Cell. Proteomics">
        <title>Multidimensional protein identification technology (MudPIT) analysis of ubiquitinated proteins in plants.</title>
        <authorList>
            <person name="Maor R."/>
            <person name="Jones A."/>
            <person name="Nuehse T.S."/>
            <person name="Studholme D.J."/>
            <person name="Peck S.C."/>
            <person name="Shirasu K."/>
        </authorList>
    </citation>
    <scope>UBIQUITINATION [LARGE SCALE ANALYSIS] AT LYS-111</scope>
    <scope>IDENTIFICATION BY MASS SPECTROMETRY [LARGE SCALE ANALYSIS]</scope>
    <source>
        <strain>cv. Landsberg erecta</strain>
    </source>
</reference>
<reference key="6">
    <citation type="journal article" date="2013" name="BMC Plant Biol.">
        <title>The Arabidopsis LRR-RLK, PXC1, is a regulator of secondary wall formation correlated with the TDIF-PXY/TDR-WOX4 signaling pathway.</title>
        <authorList>
            <person name="Wang J."/>
            <person name="Kucukoglu M."/>
            <person name="Zhang L."/>
            <person name="Chen P."/>
            <person name="Decker D."/>
            <person name="Nilsson O."/>
            <person name="Jones B."/>
            <person name="Sandberg G."/>
            <person name="Zheng B."/>
        </authorList>
    </citation>
    <scope>FUNCTION</scope>
    <scope>TISSUE SPECIFICITY</scope>
    <scope>DISRUPTION PHENOTYPE</scope>
</reference>
<sequence>MAAKPLLLPLLLLLHLSITLAQNDTNALTLFRLQTDTHGNLAGNWTGSDACTSSWQGVSCSPSSHRVTELSLPSLSLRGPLTSLSSLDQLRLLDLHDNRLNGTVSPLTNCKNLRLVYLAGNDLSGEIPKEISFLKRMIRLDLSDNNIRGVIPREILGFTRVLTIRIQNNELTGRIPDFSQMKSLLELNVSFNELHGNVSDGVVKKFGDLSFSGNEGLCGSDPLPVCTITNDPESSNTDQIVPSNPTSIPHSPVSVREPEIHSHRGIKPGIIAAVIGGCVAVIVLVSFGFAFCCGRLDRNGERSKSGSVETGFVGGGEGKRRSSYGEGGESDATSATDRSRLVFFERRKQFELDDLLKASAEMLGKGSLGTVYKAVLDDGSTTVAVKRLKDANPCPRKEFEQYMEIIGRLKHQNVVKLRAYYYAKEEKLLVYEYLPNGSLHSLLHGNRGPGRIPLDWTTRISLMLGAARGLAKIHDEYSISKIPHGNIKSSNVLLDRNGVALIADFGLSLLLNPVHAIARLGGYRAPEQSEIKRLSQKADVYSFGVLLLEVLTGKAPSIFPSPSRPRSAASVAVEEEEEAVVDLPKWVRSVVKEEWTAEVFDPELLRYKNIEEEMVAMLHIGLACVVPQPEKRPTMAEVVKMVEEIRVEQSPVGEDFDESRNSMSPSLATTDG</sequence>
<keyword id="KW-0067">ATP-binding</keyword>
<keyword id="KW-1003">Cell membrane</keyword>
<keyword id="KW-0325">Glycoprotein</keyword>
<keyword id="KW-1017">Isopeptide bond</keyword>
<keyword id="KW-0433">Leucine-rich repeat</keyword>
<keyword id="KW-0472">Membrane</keyword>
<keyword id="KW-0547">Nucleotide-binding</keyword>
<keyword id="KW-0675">Receptor</keyword>
<keyword id="KW-1185">Reference proteome</keyword>
<keyword id="KW-0677">Repeat</keyword>
<keyword id="KW-0732">Signal</keyword>
<keyword id="KW-0812">Transmembrane</keyword>
<keyword id="KW-1133">Transmembrane helix</keyword>
<keyword id="KW-0832">Ubl conjugation</keyword>
<dbReference type="EMBL" id="AC006919">
    <property type="protein sequence ID" value="AAD24639.1"/>
    <property type="molecule type" value="Genomic_DNA"/>
</dbReference>
<dbReference type="EMBL" id="CP002685">
    <property type="protein sequence ID" value="AEC09269.1"/>
    <property type="molecule type" value="Genomic_DNA"/>
</dbReference>
<dbReference type="EMBL" id="FJ708710">
    <property type="protein sequence ID" value="ACN59305.1"/>
    <property type="molecule type" value="mRNA"/>
</dbReference>
<dbReference type="EMBL" id="AK227854">
    <property type="protein sequence ID" value="BAE99831.1"/>
    <property type="molecule type" value="mRNA"/>
</dbReference>
<dbReference type="PIR" id="B84782">
    <property type="entry name" value="B84782"/>
</dbReference>
<dbReference type="RefSeq" id="NP_181196.1">
    <property type="nucleotide sequence ID" value="NM_129213.3"/>
</dbReference>
<dbReference type="SMR" id="Q9SJQ1"/>
<dbReference type="FunCoup" id="Q9SJQ1">
    <property type="interactions" value="850"/>
</dbReference>
<dbReference type="IntAct" id="Q9SJQ1">
    <property type="interactions" value="4"/>
</dbReference>
<dbReference type="STRING" id="3702.Q9SJQ1"/>
<dbReference type="GlyCosmos" id="Q9SJQ1">
    <property type="glycosylation" value="5 sites, No reported glycans"/>
</dbReference>
<dbReference type="GlyGen" id="Q9SJQ1">
    <property type="glycosylation" value="5 sites"/>
</dbReference>
<dbReference type="iPTMnet" id="Q9SJQ1"/>
<dbReference type="PaxDb" id="3702-AT2G36570.1"/>
<dbReference type="ProteomicsDB" id="226024"/>
<dbReference type="EnsemblPlants" id="AT2G36570.1">
    <property type="protein sequence ID" value="AT2G36570.1"/>
    <property type="gene ID" value="AT2G36570"/>
</dbReference>
<dbReference type="GeneID" id="818230"/>
<dbReference type="Gramene" id="AT2G36570.1">
    <property type="protein sequence ID" value="AT2G36570.1"/>
    <property type="gene ID" value="AT2G36570"/>
</dbReference>
<dbReference type="KEGG" id="ath:AT2G36570"/>
<dbReference type="Araport" id="AT2G36570"/>
<dbReference type="TAIR" id="AT2G36570">
    <property type="gene designation" value="PXC1"/>
</dbReference>
<dbReference type="eggNOG" id="ENOG502QPUR">
    <property type="taxonomic scope" value="Eukaryota"/>
</dbReference>
<dbReference type="HOGENOM" id="CLU_000288_92_6_1"/>
<dbReference type="InParanoid" id="Q9SJQ1"/>
<dbReference type="OMA" id="HGHRMSG"/>
<dbReference type="PhylomeDB" id="Q9SJQ1"/>
<dbReference type="PRO" id="PR:Q9SJQ1"/>
<dbReference type="Proteomes" id="UP000006548">
    <property type="component" value="Chromosome 2"/>
</dbReference>
<dbReference type="ExpressionAtlas" id="Q9SJQ1">
    <property type="expression patterns" value="baseline and differential"/>
</dbReference>
<dbReference type="GO" id="GO:0005886">
    <property type="term" value="C:plasma membrane"/>
    <property type="evidence" value="ECO:0007005"/>
    <property type="project" value="TAIR"/>
</dbReference>
<dbReference type="GO" id="GO:0005524">
    <property type="term" value="F:ATP binding"/>
    <property type="evidence" value="ECO:0007669"/>
    <property type="project" value="UniProtKB-KW"/>
</dbReference>
<dbReference type="GO" id="GO:0004672">
    <property type="term" value="F:protein kinase activity"/>
    <property type="evidence" value="ECO:0007669"/>
    <property type="project" value="InterPro"/>
</dbReference>
<dbReference type="GO" id="GO:0009834">
    <property type="term" value="P:plant-type secondary cell wall biogenesis"/>
    <property type="evidence" value="ECO:0000315"/>
    <property type="project" value="UniProtKB"/>
</dbReference>
<dbReference type="CDD" id="cd14066">
    <property type="entry name" value="STKc_IRAK"/>
    <property type="match status" value="1"/>
</dbReference>
<dbReference type="FunFam" id="3.80.10.10:FF:000400">
    <property type="entry name" value="Nuclear pore complex protein NUP107"/>
    <property type="match status" value="1"/>
</dbReference>
<dbReference type="FunFam" id="3.30.200.20:FF:000307">
    <property type="entry name" value="pollen receptor-like kinase 1"/>
    <property type="match status" value="1"/>
</dbReference>
<dbReference type="FunFam" id="1.10.510.10:FF:000095">
    <property type="entry name" value="protein STRUBBELIG-RECEPTOR FAMILY 8"/>
    <property type="match status" value="1"/>
</dbReference>
<dbReference type="Gene3D" id="3.30.200.20">
    <property type="entry name" value="Phosphorylase Kinase, domain 1"/>
    <property type="match status" value="1"/>
</dbReference>
<dbReference type="Gene3D" id="3.80.10.10">
    <property type="entry name" value="Ribonuclease Inhibitor"/>
    <property type="match status" value="2"/>
</dbReference>
<dbReference type="Gene3D" id="1.10.510.10">
    <property type="entry name" value="Transferase(Phosphotransferase) domain 1"/>
    <property type="match status" value="1"/>
</dbReference>
<dbReference type="InterPro" id="IPR011009">
    <property type="entry name" value="Kinase-like_dom_sf"/>
</dbReference>
<dbReference type="InterPro" id="IPR001611">
    <property type="entry name" value="Leu-rich_rpt"/>
</dbReference>
<dbReference type="InterPro" id="IPR032675">
    <property type="entry name" value="LRR_dom_sf"/>
</dbReference>
<dbReference type="InterPro" id="IPR013210">
    <property type="entry name" value="LRR_N_plant-typ"/>
</dbReference>
<dbReference type="InterPro" id="IPR046959">
    <property type="entry name" value="PRK1-6/SRF4-like"/>
</dbReference>
<dbReference type="InterPro" id="IPR000719">
    <property type="entry name" value="Prot_kinase_dom"/>
</dbReference>
<dbReference type="PANTHER" id="PTHR48007">
    <property type="entry name" value="LEUCINE-RICH REPEAT RECEPTOR-LIKE PROTEIN KINASE PXC1"/>
    <property type="match status" value="1"/>
</dbReference>
<dbReference type="PANTHER" id="PTHR48007:SF4">
    <property type="entry name" value="LEUCINE-RICH REPEAT RECEPTOR-LIKE PROTEIN KINASE PXC1"/>
    <property type="match status" value="1"/>
</dbReference>
<dbReference type="Pfam" id="PF00560">
    <property type="entry name" value="LRR_1"/>
    <property type="match status" value="2"/>
</dbReference>
<dbReference type="Pfam" id="PF08263">
    <property type="entry name" value="LRRNT_2"/>
    <property type="match status" value="1"/>
</dbReference>
<dbReference type="Pfam" id="PF00069">
    <property type="entry name" value="Pkinase"/>
    <property type="match status" value="1"/>
</dbReference>
<dbReference type="SUPFAM" id="SSF52058">
    <property type="entry name" value="L domain-like"/>
    <property type="match status" value="1"/>
</dbReference>
<dbReference type="SUPFAM" id="SSF56112">
    <property type="entry name" value="Protein kinase-like (PK-like)"/>
    <property type="match status" value="1"/>
</dbReference>
<dbReference type="PROSITE" id="PS50011">
    <property type="entry name" value="PROTEIN_KINASE_DOM"/>
    <property type="match status" value="1"/>
</dbReference>